<evidence type="ECO:0000269" key="1">
    <source>
    </source>
</evidence>
<evidence type="ECO:0000269" key="2">
    <source>
    </source>
</evidence>
<evidence type="ECO:0007829" key="3">
    <source>
        <dbReference type="PDB" id="2K0Q"/>
    </source>
</evidence>
<evidence type="ECO:0007829" key="4">
    <source>
        <dbReference type="PDB" id="2LEL"/>
    </source>
</evidence>
<evidence type="ECO:0007829" key="5">
    <source>
        <dbReference type="PDB" id="3DSO"/>
    </source>
</evidence>
<geneLocation type="plasmid">
    <name>pMOL30</name>
</geneLocation>
<comment type="function">
    <text evidence="2">Involved in resistance to copper. Can bind up to 2 copper ions. Has higher affinity for Cu(+) than for Cu(2+).</text>
</comment>
<comment type="subunit">
    <text evidence="2">Monomer in the copper-bound form. Homodimer as apoprotein. Dissociates into monomers upon copper binding.</text>
</comment>
<comment type="subcellular location">
    <subcellularLocation>
        <location evidence="1 2">Periplasm</location>
    </subcellularLocation>
</comment>
<comment type="induction">
    <text evidence="1 2">By Cu(2+). Maximally expressed 30 minutes after induction with 0.4 mM copper.</text>
</comment>
<comment type="mass spectrometry" mass="8279.58" error="0.06" method="Electrospray" evidence="2"/>
<proteinExistence type="evidence at protein level"/>
<reference key="1">
    <citation type="submission" date="2004-11" db="EMBL/GenBank/DDBJ databases">
        <title>Sequence and features of the Ralstonia metallidurans CH34 heavy metals plasmids pMOL28 and pMOL30.</title>
        <authorList>
            <person name="Monchy S."/>
            <person name="van der Lelie D."/>
            <person name="Vallaeys T."/>
            <person name="Taghavi S."/>
            <person name="Benotmane M."/>
            <person name="McCorkle S."/>
            <person name="Dunn J."/>
            <person name="Lapidus A."/>
            <person name="Mergeay M."/>
        </authorList>
    </citation>
    <scope>NUCLEOTIDE SEQUENCE [LARGE SCALE GENOMIC DNA]</scope>
</reference>
<reference key="2">
    <citation type="journal article" date="2010" name="PLoS ONE">
        <title>The complete genome sequence of Cupriavidus metallidurans strain CH34, a master survivalist in harsh and anthropogenic environments.</title>
        <authorList>
            <person name="Janssen P.J."/>
            <person name="Van Houdt R."/>
            <person name="Moors H."/>
            <person name="Monsieurs P."/>
            <person name="Morin N."/>
            <person name="Michaux A."/>
            <person name="Benotmane M.A."/>
            <person name="Leys N."/>
            <person name="Vallaeys T."/>
            <person name="Lapidus A."/>
            <person name="Monchy S."/>
            <person name="Medigue C."/>
            <person name="Taghavi S."/>
            <person name="McCorkle S."/>
            <person name="Dunn J."/>
            <person name="van der Lelie D."/>
            <person name="Mergeay M."/>
        </authorList>
    </citation>
    <scope>NUCLEOTIDE SEQUENCE [LARGE SCALE GENOMIC DNA]</scope>
    <source>
        <strain>ATCC 43123 / DSM 2839 / NBRC 102507 / CH34</strain>
    </source>
</reference>
<reference key="3">
    <citation type="journal article" date="2006" name="Microbiology">
        <title>Transcriptomic and proteomic analyses of the pMOL30-encoded copper resistance in Cupriavidus metallidurans strain CH34.</title>
        <authorList>
            <person name="Monchy S."/>
            <person name="Benotmane M.A."/>
            <person name="Wattiez R."/>
            <person name="van Aelst S."/>
            <person name="Auquier V."/>
            <person name="Borremans B."/>
            <person name="Mergeay M."/>
            <person name="Taghavi S."/>
            <person name="van der Lelie D."/>
            <person name="Vallaeys T."/>
        </authorList>
    </citation>
    <scope>PROTEIN SEQUENCE OF 21-38</scope>
    <scope>IDENTIFICATION BY MASS SPECTROMETRY</scope>
    <scope>SUBCELLULAR LOCATION</scope>
    <scope>INDUCTION</scope>
</reference>
<reference key="4">
    <citation type="journal article" date="2005" name="Acta Crystallogr. F">
        <title>Overexpression, purification, crystallization and crystallographic analysis of CopK of Cupriavidus metallidurans.</title>
        <authorList>
            <person name="Tricot C."/>
            <person name="van Aelst S."/>
            <person name="Wattiez R."/>
            <person name="Mergeay M."/>
            <person name="Stalon V."/>
            <person name="Wouters J."/>
        </authorList>
    </citation>
    <scope>PARTIAL PROTEIN SEQUENCE</scope>
    <scope>IDENTIFICATION BY MASS SPECTROMETRY</scope>
    <scope>CRYSTALLIZATION</scope>
</reference>
<reference key="5">
    <citation type="journal article" date="2008" name="J. Mol. Biol.">
        <title>Molecular structure and metal-binding properties of the periplasmic CopK protein expressed in Cupriavidus metallidurans CH34 during copper challenge.</title>
        <authorList>
            <person name="Bersch B."/>
            <person name="Favier A."/>
            <person name="Schanda P."/>
            <person name="van Aelst S."/>
            <person name="Vallaeys T."/>
            <person name="Coves J."/>
            <person name="Mergeay M."/>
            <person name="Wattiez R."/>
        </authorList>
    </citation>
    <scope>STRUCTURE BY NMR OF 21-94</scope>
    <scope>FUNCTION</scope>
    <scope>SUBUNIT</scope>
    <scope>INDUCTION</scope>
    <scope>SUBCELLULAR LOCATION</scope>
    <scope>MASS SPECTROMETRY</scope>
</reference>
<feature type="signal peptide" evidence="1">
    <location>
        <begin position="1"/>
        <end position="20"/>
    </location>
</feature>
<feature type="chain" id="PRO_0000344219" description="Copper resistance protein K">
    <location>
        <begin position="21"/>
        <end position="94"/>
    </location>
</feature>
<feature type="helix" evidence="5">
    <location>
        <begin position="23"/>
        <end position="25"/>
    </location>
</feature>
<feature type="strand" evidence="5">
    <location>
        <begin position="26"/>
        <end position="32"/>
    </location>
</feature>
<feature type="strand" evidence="5">
    <location>
        <begin position="37"/>
        <end position="41"/>
    </location>
</feature>
<feature type="strand" evidence="5">
    <location>
        <begin position="46"/>
        <end position="49"/>
    </location>
</feature>
<feature type="turn" evidence="4">
    <location>
        <begin position="51"/>
        <end position="53"/>
    </location>
</feature>
<feature type="strand" evidence="5">
    <location>
        <begin position="64"/>
        <end position="66"/>
    </location>
</feature>
<feature type="strand" evidence="5">
    <location>
        <begin position="71"/>
        <end position="75"/>
    </location>
</feature>
<feature type="strand" evidence="5">
    <location>
        <begin position="78"/>
        <end position="81"/>
    </location>
</feature>
<feature type="helix" evidence="3">
    <location>
        <begin position="84"/>
        <end position="87"/>
    </location>
</feature>
<feature type="strand" evidence="4">
    <location>
        <begin position="90"/>
        <end position="92"/>
    </location>
</feature>
<dbReference type="EMBL" id="X71400">
    <property type="protein sequence ID" value="CAI11334.1"/>
    <property type="molecule type" value="Genomic_DNA"/>
</dbReference>
<dbReference type="EMBL" id="CP000354">
    <property type="protein sequence ID" value="ABF12967.1"/>
    <property type="molecule type" value="Genomic_DNA"/>
</dbReference>
<dbReference type="RefSeq" id="WP_008652571.1">
    <property type="nucleotide sequence ID" value="NC_007971.2"/>
</dbReference>
<dbReference type="RefSeq" id="YP_145685.1">
    <property type="nucleotide sequence ID" value="NC_006466.1"/>
</dbReference>
<dbReference type="PDB" id="2K0Q">
    <property type="method" value="NMR"/>
    <property type="chains" value="A=21-94"/>
</dbReference>
<dbReference type="PDB" id="2KM0">
    <property type="method" value="NMR"/>
    <property type="chains" value="A=21-94"/>
</dbReference>
<dbReference type="PDB" id="2LEL">
    <property type="method" value="NMR"/>
    <property type="chains" value="A=21-94"/>
</dbReference>
<dbReference type="PDB" id="3DSO">
    <property type="method" value="X-ray"/>
    <property type="resolution" value="1.55 A"/>
    <property type="chains" value="A=21-94"/>
</dbReference>
<dbReference type="PDB" id="3DSP">
    <property type="method" value="X-ray"/>
    <property type="resolution" value="2.20 A"/>
    <property type="chains" value="A=21-94"/>
</dbReference>
<dbReference type="PDB" id="3N7D">
    <property type="method" value="X-ray"/>
    <property type="resolution" value="2.15 A"/>
    <property type="chains" value="A/B=21-94"/>
</dbReference>
<dbReference type="PDB" id="3N7E">
    <property type="method" value="X-ray"/>
    <property type="resolution" value="2.30 A"/>
    <property type="chains" value="A/B=21-94"/>
</dbReference>
<dbReference type="PDBsum" id="2K0Q"/>
<dbReference type="PDBsum" id="2KM0"/>
<dbReference type="PDBsum" id="2LEL"/>
<dbReference type="PDBsum" id="3DSO"/>
<dbReference type="PDBsum" id="3DSP"/>
<dbReference type="PDBsum" id="3N7D"/>
<dbReference type="PDBsum" id="3N7E"/>
<dbReference type="BMRB" id="Q58AD3"/>
<dbReference type="SMR" id="Q58AD3"/>
<dbReference type="GeneID" id="92820677"/>
<dbReference type="KEGG" id="rme:Rmet_6108"/>
<dbReference type="HOGENOM" id="CLU_185099_0_0_4"/>
<dbReference type="EvolutionaryTrace" id="Q58AD3"/>
<dbReference type="Proteomes" id="UP000002429">
    <property type="component" value="Plasmid pMOL30"/>
</dbReference>
<dbReference type="GO" id="GO:0042597">
    <property type="term" value="C:periplasmic space"/>
    <property type="evidence" value="ECO:0007669"/>
    <property type="project" value="UniProtKB-SubCell"/>
</dbReference>
<dbReference type="GO" id="GO:0046872">
    <property type="term" value="F:metal ion binding"/>
    <property type="evidence" value="ECO:0007669"/>
    <property type="project" value="UniProtKB-KW"/>
</dbReference>
<dbReference type="Gene3D" id="2.40.10.300">
    <property type="entry name" value="Copper resistance protein K"/>
    <property type="match status" value="1"/>
</dbReference>
<dbReference type="InterPro" id="IPR021604">
    <property type="entry name" value="CopK"/>
</dbReference>
<dbReference type="InterPro" id="IPR038644">
    <property type="entry name" value="CopK_sf"/>
</dbReference>
<dbReference type="NCBIfam" id="NF033793">
    <property type="entry name" value="peri_CopK"/>
    <property type="match status" value="1"/>
</dbReference>
<dbReference type="Pfam" id="PF11525">
    <property type="entry name" value="CopK"/>
    <property type="match status" value="1"/>
</dbReference>
<protein>
    <recommendedName>
        <fullName>Copper resistance protein K</fullName>
    </recommendedName>
</protein>
<accession>Q58AD3</accession>
<organism>
    <name type="scientific">Cupriavidus metallidurans (strain ATCC 43123 / DSM 2839 / NBRC 102507 / CH34)</name>
    <name type="common">Ralstonia metallidurans</name>
    <dbReference type="NCBI Taxonomy" id="266264"/>
    <lineage>
        <taxon>Bacteria</taxon>
        <taxon>Pseudomonadati</taxon>
        <taxon>Pseudomonadota</taxon>
        <taxon>Betaproteobacteria</taxon>
        <taxon>Burkholderiales</taxon>
        <taxon>Burkholderiaceae</taxon>
        <taxon>Cupriavidus</taxon>
    </lineage>
</organism>
<sequence length="94" mass="10269">MKQKLMVGAFIAAVSLSAAAVDMSNVVKTYDLQDGSKVHVFKDGKMGMENKFGKSMNMPEGKVMETRDGTKIIMKGNEIFRLDEALRKGHSEGG</sequence>
<keyword id="KW-0002">3D-structure</keyword>
<keyword id="KW-0186">Copper</keyword>
<keyword id="KW-0903">Direct protein sequencing</keyword>
<keyword id="KW-0479">Metal-binding</keyword>
<keyword id="KW-0574">Periplasm</keyword>
<keyword id="KW-0614">Plasmid</keyword>
<keyword id="KW-1185">Reference proteome</keyword>
<keyword id="KW-0732">Signal</keyword>
<name>COPK_CUPMC</name>
<gene>
    <name type="primary">copK</name>
    <name type="ordered locus">Rmet_6108</name>
</gene>